<accession>A3M142</accession>
<dbReference type="EC" id="7.1.2.2" evidence="1"/>
<dbReference type="EMBL" id="CP000521">
    <property type="protein sequence ID" value="ABO10636.2"/>
    <property type="molecule type" value="Genomic_DNA"/>
</dbReference>
<dbReference type="RefSeq" id="WP_001186635.1">
    <property type="nucleotide sequence ID" value="NZ_CP053098.1"/>
</dbReference>
<dbReference type="PDB" id="7P2Y">
    <property type="method" value="EM"/>
    <property type="resolution" value="3.10 A"/>
    <property type="chains" value="A/B/C=1-514"/>
</dbReference>
<dbReference type="PDB" id="7P3N">
    <property type="method" value="EM"/>
    <property type="resolution" value="4.60 A"/>
    <property type="chains" value="A/B/C=1-514"/>
</dbReference>
<dbReference type="PDB" id="7P3W">
    <property type="method" value="EM"/>
    <property type="resolution" value="4.30 A"/>
    <property type="chains" value="A/B/C=1-514"/>
</dbReference>
<dbReference type="PDB" id="7YRY">
    <property type="method" value="EM"/>
    <property type="resolution" value="3.00 A"/>
    <property type="chains" value="A/B/C=1-514"/>
</dbReference>
<dbReference type="PDB" id="8ZI0">
    <property type="method" value="EM"/>
    <property type="resolution" value="3.18 A"/>
    <property type="chains" value="A/B/C=1-514"/>
</dbReference>
<dbReference type="PDB" id="8ZI1">
    <property type="method" value="EM"/>
    <property type="resolution" value="2.92 A"/>
    <property type="chains" value="A/B/C=1-514"/>
</dbReference>
<dbReference type="PDB" id="8ZI2">
    <property type="method" value="EM"/>
    <property type="resolution" value="2.99 A"/>
    <property type="chains" value="A/B/C=1-514"/>
</dbReference>
<dbReference type="PDB" id="8ZI3">
    <property type="method" value="EM"/>
    <property type="resolution" value="2.89 A"/>
    <property type="chains" value="A/B/C=1-514"/>
</dbReference>
<dbReference type="PDBsum" id="7P2Y"/>
<dbReference type="PDBsum" id="7P3N"/>
<dbReference type="PDBsum" id="7P3W"/>
<dbReference type="PDBsum" id="7YRY"/>
<dbReference type="PDBsum" id="8ZI0"/>
<dbReference type="PDBsum" id="8ZI1"/>
<dbReference type="PDBsum" id="8ZI2"/>
<dbReference type="PDBsum" id="8ZI3"/>
<dbReference type="EMDB" id="EMD-13174"/>
<dbReference type="EMDB" id="EMD-13181"/>
<dbReference type="EMDB" id="EMD-13186"/>
<dbReference type="EMDB" id="EMD-34066"/>
<dbReference type="EMDB" id="EMD-60117"/>
<dbReference type="EMDB" id="EMD-60118"/>
<dbReference type="EMDB" id="EMD-60119"/>
<dbReference type="EMDB" id="EMD-60120"/>
<dbReference type="SMR" id="A3M142"/>
<dbReference type="GeneID" id="92892165"/>
<dbReference type="KEGG" id="acb:A1S_0153"/>
<dbReference type="HOGENOM" id="CLU_010091_2_1_6"/>
<dbReference type="GO" id="GO:0005886">
    <property type="term" value="C:plasma membrane"/>
    <property type="evidence" value="ECO:0007669"/>
    <property type="project" value="UniProtKB-SubCell"/>
</dbReference>
<dbReference type="GO" id="GO:0045259">
    <property type="term" value="C:proton-transporting ATP synthase complex"/>
    <property type="evidence" value="ECO:0007669"/>
    <property type="project" value="UniProtKB-KW"/>
</dbReference>
<dbReference type="GO" id="GO:0043531">
    <property type="term" value="F:ADP binding"/>
    <property type="evidence" value="ECO:0007669"/>
    <property type="project" value="TreeGrafter"/>
</dbReference>
<dbReference type="GO" id="GO:0005524">
    <property type="term" value="F:ATP binding"/>
    <property type="evidence" value="ECO:0007669"/>
    <property type="project" value="UniProtKB-UniRule"/>
</dbReference>
<dbReference type="GO" id="GO:0046933">
    <property type="term" value="F:proton-transporting ATP synthase activity, rotational mechanism"/>
    <property type="evidence" value="ECO:0007669"/>
    <property type="project" value="UniProtKB-UniRule"/>
</dbReference>
<dbReference type="CDD" id="cd18113">
    <property type="entry name" value="ATP-synt_F1_alpha_C"/>
    <property type="match status" value="1"/>
</dbReference>
<dbReference type="CDD" id="cd18116">
    <property type="entry name" value="ATP-synt_F1_alpha_N"/>
    <property type="match status" value="1"/>
</dbReference>
<dbReference type="CDD" id="cd01132">
    <property type="entry name" value="F1-ATPase_alpha_CD"/>
    <property type="match status" value="1"/>
</dbReference>
<dbReference type="FunFam" id="1.20.150.20:FF:000001">
    <property type="entry name" value="ATP synthase subunit alpha"/>
    <property type="match status" value="1"/>
</dbReference>
<dbReference type="FunFam" id="2.40.30.20:FF:000001">
    <property type="entry name" value="ATP synthase subunit alpha"/>
    <property type="match status" value="1"/>
</dbReference>
<dbReference type="FunFam" id="3.40.50.300:FF:000002">
    <property type="entry name" value="ATP synthase subunit alpha"/>
    <property type="match status" value="1"/>
</dbReference>
<dbReference type="Gene3D" id="2.40.30.20">
    <property type="match status" value="1"/>
</dbReference>
<dbReference type="Gene3D" id="1.20.150.20">
    <property type="entry name" value="ATP synthase alpha/beta chain, C-terminal domain"/>
    <property type="match status" value="1"/>
</dbReference>
<dbReference type="Gene3D" id="3.40.50.300">
    <property type="entry name" value="P-loop containing nucleotide triphosphate hydrolases"/>
    <property type="match status" value="1"/>
</dbReference>
<dbReference type="HAMAP" id="MF_01346">
    <property type="entry name" value="ATP_synth_alpha_bact"/>
    <property type="match status" value="1"/>
</dbReference>
<dbReference type="InterPro" id="IPR023366">
    <property type="entry name" value="ATP_synth_asu-like_sf"/>
</dbReference>
<dbReference type="InterPro" id="IPR000793">
    <property type="entry name" value="ATP_synth_asu_C"/>
</dbReference>
<dbReference type="InterPro" id="IPR038376">
    <property type="entry name" value="ATP_synth_asu_C_sf"/>
</dbReference>
<dbReference type="InterPro" id="IPR033732">
    <property type="entry name" value="ATP_synth_F1_a_nt-bd_dom"/>
</dbReference>
<dbReference type="InterPro" id="IPR005294">
    <property type="entry name" value="ATP_synth_F1_asu"/>
</dbReference>
<dbReference type="InterPro" id="IPR020003">
    <property type="entry name" value="ATPase_a/bsu_AS"/>
</dbReference>
<dbReference type="InterPro" id="IPR004100">
    <property type="entry name" value="ATPase_F1/V1/A1_a/bsu_N"/>
</dbReference>
<dbReference type="InterPro" id="IPR036121">
    <property type="entry name" value="ATPase_F1/V1/A1_a/bsu_N_sf"/>
</dbReference>
<dbReference type="InterPro" id="IPR000194">
    <property type="entry name" value="ATPase_F1/V1/A1_a/bsu_nucl-bd"/>
</dbReference>
<dbReference type="InterPro" id="IPR027417">
    <property type="entry name" value="P-loop_NTPase"/>
</dbReference>
<dbReference type="NCBIfam" id="TIGR00962">
    <property type="entry name" value="atpA"/>
    <property type="match status" value="1"/>
</dbReference>
<dbReference type="NCBIfam" id="NF009884">
    <property type="entry name" value="PRK13343.1"/>
    <property type="match status" value="1"/>
</dbReference>
<dbReference type="PANTHER" id="PTHR48082">
    <property type="entry name" value="ATP SYNTHASE SUBUNIT ALPHA, MITOCHONDRIAL"/>
    <property type="match status" value="1"/>
</dbReference>
<dbReference type="PANTHER" id="PTHR48082:SF2">
    <property type="entry name" value="ATP SYNTHASE SUBUNIT ALPHA, MITOCHONDRIAL"/>
    <property type="match status" value="1"/>
</dbReference>
<dbReference type="Pfam" id="PF00006">
    <property type="entry name" value="ATP-synt_ab"/>
    <property type="match status" value="1"/>
</dbReference>
<dbReference type="Pfam" id="PF00306">
    <property type="entry name" value="ATP-synt_ab_C"/>
    <property type="match status" value="1"/>
</dbReference>
<dbReference type="Pfam" id="PF02874">
    <property type="entry name" value="ATP-synt_ab_N"/>
    <property type="match status" value="1"/>
</dbReference>
<dbReference type="SUPFAM" id="SSF47917">
    <property type="entry name" value="C-terminal domain of alpha and beta subunits of F1 ATP synthase"/>
    <property type="match status" value="1"/>
</dbReference>
<dbReference type="SUPFAM" id="SSF50615">
    <property type="entry name" value="N-terminal domain of alpha and beta subunits of F1 ATP synthase"/>
    <property type="match status" value="1"/>
</dbReference>
<dbReference type="SUPFAM" id="SSF52540">
    <property type="entry name" value="P-loop containing nucleoside triphosphate hydrolases"/>
    <property type="match status" value="1"/>
</dbReference>
<dbReference type="PROSITE" id="PS00152">
    <property type="entry name" value="ATPASE_ALPHA_BETA"/>
    <property type="match status" value="1"/>
</dbReference>
<proteinExistence type="evidence at protein level"/>
<gene>
    <name evidence="1" type="primary">atpA</name>
    <name type="ordered locus">A1S_0153</name>
</gene>
<evidence type="ECO:0000255" key="1">
    <source>
        <dbReference type="HAMAP-Rule" id="MF_01346"/>
    </source>
</evidence>
<evidence type="ECO:0007829" key="2">
    <source>
        <dbReference type="PDB" id="7P2Y"/>
    </source>
</evidence>
<organism>
    <name type="scientific">Acinetobacter baumannii (strain ATCC 17978 / DSM 105126 / CIP 53.77 / LMG 1025 / NCDC KC755 / 5377)</name>
    <dbReference type="NCBI Taxonomy" id="400667"/>
    <lineage>
        <taxon>Bacteria</taxon>
        <taxon>Pseudomonadati</taxon>
        <taxon>Pseudomonadota</taxon>
        <taxon>Gammaproteobacteria</taxon>
        <taxon>Moraxellales</taxon>
        <taxon>Moraxellaceae</taxon>
        <taxon>Acinetobacter</taxon>
        <taxon>Acinetobacter calcoaceticus/baumannii complex</taxon>
    </lineage>
</organism>
<protein>
    <recommendedName>
        <fullName evidence="1">ATP synthase subunit alpha</fullName>
        <ecNumber evidence="1">7.1.2.2</ecNumber>
    </recommendedName>
    <alternativeName>
        <fullName evidence="1">ATP synthase F1 sector subunit alpha</fullName>
    </alternativeName>
    <alternativeName>
        <fullName evidence="1">F-ATPase subunit alpha</fullName>
    </alternativeName>
</protein>
<keyword id="KW-0002">3D-structure</keyword>
<keyword id="KW-0066">ATP synthesis</keyword>
<keyword id="KW-0067">ATP-binding</keyword>
<keyword id="KW-0997">Cell inner membrane</keyword>
<keyword id="KW-1003">Cell membrane</keyword>
<keyword id="KW-0139">CF(1)</keyword>
<keyword id="KW-0375">Hydrogen ion transport</keyword>
<keyword id="KW-0406">Ion transport</keyword>
<keyword id="KW-0472">Membrane</keyword>
<keyword id="KW-0547">Nucleotide-binding</keyword>
<keyword id="KW-1278">Translocase</keyword>
<keyword id="KW-0813">Transport</keyword>
<sequence>MQQLNPSEISALIKQRIGDLDTSATAKNEGTIVMVSDGIVRIHGLADAMYGEMIEFDGGLFGMALNLEQDSVGAVVLGNYLSLQEGQKARCTGRVLEVPVGPELLGRVVDALGNPIDGKGPIDAKLTDAVEKVAPGVIWRQSVDQPVQTGYKSVDTMIPVGRGQRELIIGDRQTGKTAMAIDAIIAQKNSGIKCVYVAIGQKQSTIANVVRKLEETGAMAYTTVVAAAAADPAAMQYLAPYSGCTMGEYFRDRGEDALIIYDDLSKQAVAYRQISLLLRRPPGREAYPGDVFYLHSRLLERASRVSAEYVEKFTNGAVTGKTGSLTALPIIETQAGDVSAFVPTNVISITDGQIFLETSLFNAGIRPAVNAGISVSRVGGSAQTKIIKKLSGGIRTALAQYRELAAFAQFASDLDEATRKQLEHGQRVTELMKQKQYAPYSIADQAVSVYASNEGYMADVEVKKIVDFDAALIAYFRSEYAPLMKQIDETGDYNKDIEAAIKAGIESFKATQTY</sequence>
<reference key="1">
    <citation type="journal article" date="2007" name="Genes Dev.">
        <title>New insights into Acinetobacter baumannii pathogenesis revealed by high-density pyrosequencing and transposon mutagenesis.</title>
        <authorList>
            <person name="Smith M.G."/>
            <person name="Gianoulis T.A."/>
            <person name="Pukatzki S."/>
            <person name="Mekalanos J.J."/>
            <person name="Ornston L.N."/>
            <person name="Gerstein M."/>
            <person name="Snyder M."/>
        </authorList>
    </citation>
    <scope>NUCLEOTIDE SEQUENCE [LARGE SCALE GENOMIC DNA]</scope>
    <source>
        <strain>ATCC 17978 / DSM 105126 / CIP 53.77 / LMG 1025 / NCDC KC755 / 5377</strain>
    </source>
</reference>
<feature type="chain" id="PRO_0000339012" description="ATP synthase subunit alpha">
    <location>
        <begin position="1"/>
        <end position="514"/>
    </location>
</feature>
<feature type="binding site" evidence="1">
    <location>
        <begin position="170"/>
        <end position="177"/>
    </location>
    <ligand>
        <name>ATP</name>
        <dbReference type="ChEBI" id="CHEBI:30616"/>
    </ligand>
</feature>
<feature type="site" description="Required for activity" evidence="1">
    <location>
        <position position="374"/>
    </location>
</feature>
<feature type="helix" evidence="2">
    <location>
        <begin position="4"/>
        <end position="14"/>
    </location>
</feature>
<feature type="helix" evidence="2">
    <location>
        <begin position="18"/>
        <end position="24"/>
    </location>
</feature>
<feature type="strand" evidence="2">
    <location>
        <begin position="31"/>
        <end position="36"/>
    </location>
</feature>
<feature type="strand" evidence="2">
    <location>
        <begin position="39"/>
        <end position="43"/>
    </location>
</feature>
<feature type="strand" evidence="2">
    <location>
        <begin position="53"/>
        <end position="56"/>
    </location>
</feature>
<feature type="strand" evidence="2">
    <location>
        <begin position="61"/>
        <end position="67"/>
    </location>
</feature>
<feature type="strand" evidence="2">
    <location>
        <begin position="69"/>
        <end position="78"/>
    </location>
</feature>
<feature type="helix" evidence="2">
    <location>
        <begin position="80"/>
        <end position="82"/>
    </location>
</feature>
<feature type="strand" evidence="2">
    <location>
        <begin position="88"/>
        <end position="91"/>
    </location>
</feature>
<feature type="strand" evidence="2">
    <location>
        <begin position="96"/>
        <end position="101"/>
    </location>
</feature>
<feature type="helix" evidence="2">
    <location>
        <begin position="102"/>
        <end position="104"/>
    </location>
</feature>
<feature type="strand" evidence="2">
    <location>
        <begin position="117"/>
        <end position="119"/>
    </location>
</feature>
<feature type="strand" evidence="2">
    <location>
        <begin position="125"/>
        <end position="131"/>
    </location>
</feature>
<feature type="helix" evidence="2">
    <location>
        <begin position="153"/>
        <end position="157"/>
    </location>
</feature>
<feature type="strand" evidence="2">
    <location>
        <begin position="168"/>
        <end position="171"/>
    </location>
</feature>
<feature type="helix" evidence="2">
    <location>
        <begin position="176"/>
        <end position="185"/>
    </location>
</feature>
<feature type="helix" evidence="2">
    <location>
        <begin position="186"/>
        <end position="188"/>
    </location>
</feature>
<feature type="turn" evidence="2">
    <location>
        <begin position="189"/>
        <end position="191"/>
    </location>
</feature>
<feature type="strand" evidence="2">
    <location>
        <begin position="193"/>
        <end position="200"/>
    </location>
</feature>
<feature type="helix" evidence="2">
    <location>
        <begin position="203"/>
        <end position="215"/>
    </location>
</feature>
<feature type="helix" evidence="2">
    <location>
        <begin position="218"/>
        <end position="220"/>
    </location>
</feature>
<feature type="strand" evidence="2">
    <location>
        <begin position="221"/>
        <end position="227"/>
    </location>
</feature>
<feature type="helix" evidence="2">
    <location>
        <begin position="233"/>
        <end position="252"/>
    </location>
</feature>
<feature type="strand" evidence="2">
    <location>
        <begin position="257"/>
        <end position="262"/>
    </location>
</feature>
<feature type="helix" evidence="2">
    <location>
        <begin position="264"/>
        <end position="277"/>
    </location>
</feature>
<feature type="helix" evidence="2">
    <location>
        <begin position="284"/>
        <end position="286"/>
    </location>
</feature>
<feature type="helix" evidence="2">
    <location>
        <begin position="291"/>
        <end position="299"/>
    </location>
</feature>
<feature type="helix" evidence="2">
    <location>
        <begin position="307"/>
        <end position="313"/>
    </location>
</feature>
<feature type="turn" evidence="2">
    <location>
        <begin position="315"/>
        <end position="317"/>
    </location>
</feature>
<feature type="strand" evidence="2">
    <location>
        <begin position="330"/>
        <end position="332"/>
    </location>
</feature>
<feature type="helix" evidence="2">
    <location>
        <begin position="341"/>
        <end position="347"/>
    </location>
</feature>
<feature type="strand" evidence="2">
    <location>
        <begin position="350"/>
        <end position="356"/>
    </location>
</feature>
<feature type="helix" evidence="2">
    <location>
        <begin position="358"/>
        <end position="362"/>
    </location>
</feature>
<feature type="strand" evidence="2">
    <location>
        <begin position="369"/>
        <end position="376"/>
    </location>
</feature>
<feature type="helix" evidence="2">
    <location>
        <begin position="379"/>
        <end position="382"/>
    </location>
</feature>
<feature type="helix" evidence="2">
    <location>
        <begin position="385"/>
        <end position="390"/>
    </location>
</feature>
<feature type="helix" evidence="2">
    <location>
        <begin position="394"/>
        <end position="407"/>
    </location>
</feature>
<feature type="helix" evidence="2">
    <location>
        <begin position="416"/>
        <end position="431"/>
    </location>
</feature>
<feature type="helix" evidence="2">
    <location>
        <begin position="442"/>
        <end position="453"/>
    </location>
</feature>
<feature type="turn" evidence="2">
    <location>
        <begin position="454"/>
        <end position="459"/>
    </location>
</feature>
<feature type="turn" evidence="2">
    <location>
        <begin position="462"/>
        <end position="464"/>
    </location>
</feature>
<feature type="helix" evidence="2">
    <location>
        <begin position="465"/>
        <end position="479"/>
    </location>
</feature>
<feature type="helix" evidence="2">
    <location>
        <begin position="481"/>
        <end position="489"/>
    </location>
</feature>
<feature type="helix" evidence="2">
    <location>
        <begin position="495"/>
        <end position="510"/>
    </location>
</feature>
<comment type="function">
    <text evidence="1">Produces ATP from ADP in the presence of a proton gradient across the membrane. The alpha chain is a regulatory subunit.</text>
</comment>
<comment type="catalytic activity">
    <reaction evidence="1">
        <text>ATP + H2O + 4 H(+)(in) = ADP + phosphate + 5 H(+)(out)</text>
        <dbReference type="Rhea" id="RHEA:57720"/>
        <dbReference type="ChEBI" id="CHEBI:15377"/>
        <dbReference type="ChEBI" id="CHEBI:15378"/>
        <dbReference type="ChEBI" id="CHEBI:30616"/>
        <dbReference type="ChEBI" id="CHEBI:43474"/>
        <dbReference type="ChEBI" id="CHEBI:456216"/>
        <dbReference type="EC" id="7.1.2.2"/>
    </reaction>
</comment>
<comment type="subunit">
    <text evidence="1">F-type ATPases have 2 components, CF(1) - the catalytic core - and CF(0) - the membrane proton channel. CF(1) has five subunits: alpha(3), beta(3), gamma(1), delta(1), epsilon(1). CF(0) has three main subunits: a(1), b(2) and c(9-12). The alpha and beta chains form an alternating ring which encloses part of the gamma chain. CF(1) is attached to CF(0) by a central stalk formed by the gamma and epsilon chains, while a peripheral stalk is formed by the delta and b chains.</text>
</comment>
<comment type="subcellular location">
    <subcellularLocation>
        <location evidence="1">Cell inner membrane</location>
        <topology evidence="1">Peripheral membrane protein</topology>
    </subcellularLocation>
</comment>
<comment type="similarity">
    <text evidence="1">Belongs to the ATPase alpha/beta chains family.</text>
</comment>
<name>ATPA_ACIBT</name>